<reference key="1">
    <citation type="journal article" date="2009" name="Infect. Immun.">
        <title>Comparative genomics reveal extensive transposon-mediated genomic plasticity and diversity among potential effector proteins within the genus Coxiella.</title>
        <authorList>
            <person name="Beare P.A."/>
            <person name="Unsworth N."/>
            <person name="Andoh M."/>
            <person name="Voth D.E."/>
            <person name="Omsland A."/>
            <person name="Gilk S.D."/>
            <person name="Williams K.P."/>
            <person name="Sobral B.W."/>
            <person name="Kupko J.J. III"/>
            <person name="Porcella S.F."/>
            <person name="Samuel J.E."/>
            <person name="Heinzen R.A."/>
        </authorList>
    </citation>
    <scope>NUCLEOTIDE SEQUENCE [LARGE SCALE GENOMIC DNA]</scope>
    <source>
        <strain>Dugway 5J108-111</strain>
    </source>
</reference>
<proteinExistence type="inferred from homology"/>
<keyword id="KW-0963">Cytoplasm</keyword>
<keyword id="KW-0350">Heme biosynthesis</keyword>
<keyword id="KW-0479">Metal-binding</keyword>
<keyword id="KW-0560">Oxidoreductase</keyword>
<keyword id="KW-0627">Porphyrin biosynthesis</keyword>
<dbReference type="EC" id="1.3.3.3" evidence="1"/>
<dbReference type="EMBL" id="CP000733">
    <property type="protein sequence ID" value="ABS76568.2"/>
    <property type="status" value="ALT_INIT"/>
    <property type="molecule type" value="Genomic_DNA"/>
</dbReference>
<dbReference type="SMR" id="A9KC01"/>
<dbReference type="KEGG" id="cbd:CBUD_0273"/>
<dbReference type="HOGENOM" id="CLU_026169_0_1_6"/>
<dbReference type="UniPathway" id="UPA00251">
    <property type="reaction ID" value="UER00322"/>
</dbReference>
<dbReference type="Proteomes" id="UP000008555">
    <property type="component" value="Chromosome"/>
</dbReference>
<dbReference type="GO" id="GO:0005737">
    <property type="term" value="C:cytoplasm"/>
    <property type="evidence" value="ECO:0007669"/>
    <property type="project" value="UniProtKB-SubCell"/>
</dbReference>
<dbReference type="GO" id="GO:0004109">
    <property type="term" value="F:coproporphyrinogen oxidase activity"/>
    <property type="evidence" value="ECO:0007669"/>
    <property type="project" value="UniProtKB-UniRule"/>
</dbReference>
<dbReference type="GO" id="GO:0046872">
    <property type="term" value="F:metal ion binding"/>
    <property type="evidence" value="ECO:0007669"/>
    <property type="project" value="UniProtKB-KW"/>
</dbReference>
<dbReference type="GO" id="GO:0042803">
    <property type="term" value="F:protein homodimerization activity"/>
    <property type="evidence" value="ECO:0000250"/>
    <property type="project" value="UniProtKB"/>
</dbReference>
<dbReference type="GO" id="GO:0006782">
    <property type="term" value="P:protoporphyrinogen IX biosynthetic process"/>
    <property type="evidence" value="ECO:0007669"/>
    <property type="project" value="UniProtKB-UniRule"/>
</dbReference>
<dbReference type="FunFam" id="3.40.1500.10:FF:000012">
    <property type="entry name" value="Oxygen-dependent coproporphyrinogen-III oxidase"/>
    <property type="match status" value="1"/>
</dbReference>
<dbReference type="Gene3D" id="3.40.1500.10">
    <property type="entry name" value="Coproporphyrinogen III oxidase, aerobic"/>
    <property type="match status" value="1"/>
</dbReference>
<dbReference type="HAMAP" id="MF_00333">
    <property type="entry name" value="Coprogen_oxidas"/>
    <property type="match status" value="1"/>
</dbReference>
<dbReference type="InterPro" id="IPR001260">
    <property type="entry name" value="Coprogen_oxidase_aer"/>
</dbReference>
<dbReference type="InterPro" id="IPR036406">
    <property type="entry name" value="Coprogen_oxidase_aer_sf"/>
</dbReference>
<dbReference type="InterPro" id="IPR018375">
    <property type="entry name" value="Coprogen_oxidase_CS"/>
</dbReference>
<dbReference type="NCBIfam" id="NF003727">
    <property type="entry name" value="PRK05330.1"/>
    <property type="match status" value="1"/>
</dbReference>
<dbReference type="PANTHER" id="PTHR10755">
    <property type="entry name" value="COPROPORPHYRINOGEN III OXIDASE, MITOCHONDRIAL"/>
    <property type="match status" value="1"/>
</dbReference>
<dbReference type="PANTHER" id="PTHR10755:SF0">
    <property type="entry name" value="OXYGEN-DEPENDENT COPROPORPHYRINOGEN-III OXIDASE, MITOCHONDRIAL"/>
    <property type="match status" value="1"/>
</dbReference>
<dbReference type="Pfam" id="PF01218">
    <property type="entry name" value="Coprogen_oxidas"/>
    <property type="match status" value="1"/>
</dbReference>
<dbReference type="PIRSF" id="PIRSF000166">
    <property type="entry name" value="Coproporphyri_ox"/>
    <property type="match status" value="1"/>
</dbReference>
<dbReference type="PRINTS" id="PR00073">
    <property type="entry name" value="COPRGNOXDASE"/>
</dbReference>
<dbReference type="SUPFAM" id="SSF102886">
    <property type="entry name" value="Coproporphyrinogen III oxidase"/>
    <property type="match status" value="1"/>
</dbReference>
<dbReference type="PROSITE" id="PS01021">
    <property type="entry name" value="COPROGEN_OXIDASE"/>
    <property type="match status" value="1"/>
</dbReference>
<sequence length="310" mass="36496">MRKDRQNKITEVGIYLKDLQNRLCRAFEKEEGESRFQETLWEKPNGGGGRTRLLTEGHVIEQGGVNFSCVYGNQLPPAATQKHPEISGFDFQAEGLSLVIHPRNPYVPTVHANFRFFIAGKDEADPRWWFGGGYDLTPYYGFEEDCRHWHRVAKKACDRFGEAIYPRFKAACDDYFYLKHRNEPRGIGGLFFDDLNEWEFKRCFEFIKILGDSFLEAYLPIMQNRKNHPYGERQREFQLYRRGRYVEFNLLYDRGTRFGLEFGGRTESILMSLPPRVVWRPNWEPEPGSEEARLYEDYLVRRNWVSVSGA</sequence>
<accession>A9KC01</accession>
<organism>
    <name type="scientific">Coxiella burnetii (strain Dugway 5J108-111)</name>
    <dbReference type="NCBI Taxonomy" id="434922"/>
    <lineage>
        <taxon>Bacteria</taxon>
        <taxon>Pseudomonadati</taxon>
        <taxon>Pseudomonadota</taxon>
        <taxon>Gammaproteobacteria</taxon>
        <taxon>Legionellales</taxon>
        <taxon>Coxiellaceae</taxon>
        <taxon>Coxiella</taxon>
    </lineage>
</organism>
<comment type="function">
    <text evidence="1">Involved in the heme biosynthesis. Catalyzes the aerobic oxidative decarboxylation of propionate groups of rings A and B of coproporphyrinogen-III to yield the vinyl groups in protoporphyrinogen-IX.</text>
</comment>
<comment type="catalytic activity">
    <reaction evidence="1">
        <text>coproporphyrinogen III + O2 + 2 H(+) = protoporphyrinogen IX + 2 CO2 + 2 H2O</text>
        <dbReference type="Rhea" id="RHEA:18257"/>
        <dbReference type="ChEBI" id="CHEBI:15377"/>
        <dbReference type="ChEBI" id="CHEBI:15378"/>
        <dbReference type="ChEBI" id="CHEBI:15379"/>
        <dbReference type="ChEBI" id="CHEBI:16526"/>
        <dbReference type="ChEBI" id="CHEBI:57307"/>
        <dbReference type="ChEBI" id="CHEBI:57309"/>
        <dbReference type="EC" id="1.3.3.3"/>
    </reaction>
</comment>
<comment type="cofactor">
    <cofactor evidence="1">
        <name>a divalent metal cation</name>
        <dbReference type="ChEBI" id="CHEBI:60240"/>
    </cofactor>
</comment>
<comment type="pathway">
    <text evidence="1">Porphyrin-containing compound metabolism; protoporphyrin-IX biosynthesis; protoporphyrinogen-IX from coproporphyrinogen-III (O2 route): step 1/1.</text>
</comment>
<comment type="subunit">
    <text evidence="1">Homodimer.</text>
</comment>
<comment type="subcellular location">
    <subcellularLocation>
        <location evidence="1">Cytoplasm</location>
    </subcellularLocation>
</comment>
<comment type="similarity">
    <text evidence="1">Belongs to the aerobic coproporphyrinogen-III oxidase family.</text>
</comment>
<comment type="sequence caution" evidence="2">
    <conflict type="erroneous initiation">
        <sequence resource="EMBL-CDS" id="ABS76568"/>
    </conflict>
    <text>Extended N-terminus.</text>
</comment>
<protein>
    <recommendedName>
        <fullName evidence="1">Oxygen-dependent coproporphyrinogen-III oxidase</fullName>
        <shortName evidence="1">CPO</shortName>
        <shortName evidence="1">Coprogen oxidase</shortName>
        <shortName evidence="1">Coproporphyrinogenase</shortName>
        <ecNumber evidence="1">1.3.3.3</ecNumber>
    </recommendedName>
</protein>
<name>HEM6_COXBN</name>
<gene>
    <name evidence="1" type="primary">hemF</name>
    <name type="ordered locus">CBUD_0273</name>
</gene>
<feature type="chain" id="PRO_1000079255" description="Oxygen-dependent coproporphyrinogen-III oxidase">
    <location>
        <begin position="1"/>
        <end position="310"/>
    </location>
</feature>
<feature type="region of interest" description="Important for dimerization" evidence="1">
    <location>
        <begin position="245"/>
        <end position="280"/>
    </location>
</feature>
<feature type="active site" description="Proton donor" evidence="1">
    <location>
        <position position="111"/>
    </location>
</feature>
<feature type="binding site" evidence="1">
    <location>
        <position position="97"/>
    </location>
    <ligand>
        <name>substrate</name>
    </ligand>
</feature>
<feature type="binding site" evidence="1">
    <location>
        <position position="101"/>
    </location>
    <ligand>
        <name>a divalent metal cation</name>
        <dbReference type="ChEBI" id="CHEBI:60240"/>
    </ligand>
</feature>
<feature type="binding site" evidence="1">
    <location>
        <position position="111"/>
    </location>
    <ligand>
        <name>a divalent metal cation</name>
        <dbReference type="ChEBI" id="CHEBI:60240"/>
    </ligand>
</feature>
<feature type="binding site" evidence="1">
    <location>
        <begin position="113"/>
        <end position="115"/>
    </location>
    <ligand>
        <name>substrate</name>
    </ligand>
</feature>
<feature type="binding site" evidence="1">
    <location>
        <position position="150"/>
    </location>
    <ligand>
        <name>a divalent metal cation</name>
        <dbReference type="ChEBI" id="CHEBI:60240"/>
    </ligand>
</feature>
<feature type="binding site" evidence="1">
    <location>
        <position position="180"/>
    </location>
    <ligand>
        <name>a divalent metal cation</name>
        <dbReference type="ChEBI" id="CHEBI:60240"/>
    </ligand>
</feature>
<feature type="binding site" evidence="1">
    <location>
        <begin position="263"/>
        <end position="265"/>
    </location>
    <ligand>
        <name>substrate</name>
    </ligand>
</feature>
<feature type="site" description="Important for dimerization" evidence="1">
    <location>
        <position position="180"/>
    </location>
</feature>
<evidence type="ECO:0000255" key="1">
    <source>
        <dbReference type="HAMAP-Rule" id="MF_00333"/>
    </source>
</evidence>
<evidence type="ECO:0000305" key="2"/>